<gene>
    <name evidence="1" type="primary">accD</name>
    <name type="ordered locus">PputGB1_1530</name>
</gene>
<evidence type="ECO:0000255" key="1">
    <source>
        <dbReference type="HAMAP-Rule" id="MF_01395"/>
    </source>
</evidence>
<evidence type="ECO:0000255" key="2">
    <source>
        <dbReference type="PROSITE-ProRule" id="PRU01136"/>
    </source>
</evidence>
<name>ACCD_PSEPG</name>
<sequence>MSNWLVDKLIPSIMRSEVKKSSVPEGLWHKCPSCEAVLYRPELEKTLDVCPKCNHHMRIGARARIDIFLDAEGRAELGADLEPVDRLKFRDGKKYKDRLTGAQKQTGEKDALISMSGTLMGMPIVVSAFEFSFMGGSMGAIVGERFVRAANYALEHRCPMVCFSASGGARMQEALISLMQMAKTSAVLARLREEGIPFISVLTDPVYGGVSASLAMLGDVIVGEPKALIGFAGPRVIEQTVREKLPEGFQRSEFLLEHGAIDLIISRGELRPRLARLLAQMTGQDTPEQAREAAAVA</sequence>
<dbReference type="EC" id="2.1.3.15" evidence="1"/>
<dbReference type="EMBL" id="CP000926">
    <property type="protein sequence ID" value="ABY97435.1"/>
    <property type="molecule type" value="Genomic_DNA"/>
</dbReference>
<dbReference type="RefSeq" id="WP_012271202.1">
    <property type="nucleotide sequence ID" value="NC_010322.1"/>
</dbReference>
<dbReference type="SMR" id="B0KF95"/>
<dbReference type="KEGG" id="ppg:PputGB1_1530"/>
<dbReference type="eggNOG" id="COG0777">
    <property type="taxonomic scope" value="Bacteria"/>
</dbReference>
<dbReference type="HOGENOM" id="CLU_015486_1_0_6"/>
<dbReference type="UniPathway" id="UPA00655">
    <property type="reaction ID" value="UER00711"/>
</dbReference>
<dbReference type="Proteomes" id="UP000002157">
    <property type="component" value="Chromosome"/>
</dbReference>
<dbReference type="GO" id="GO:0009329">
    <property type="term" value="C:acetate CoA-transferase complex"/>
    <property type="evidence" value="ECO:0007669"/>
    <property type="project" value="TreeGrafter"/>
</dbReference>
<dbReference type="GO" id="GO:0003989">
    <property type="term" value="F:acetyl-CoA carboxylase activity"/>
    <property type="evidence" value="ECO:0007669"/>
    <property type="project" value="InterPro"/>
</dbReference>
<dbReference type="GO" id="GO:0005524">
    <property type="term" value="F:ATP binding"/>
    <property type="evidence" value="ECO:0007669"/>
    <property type="project" value="UniProtKB-KW"/>
</dbReference>
<dbReference type="GO" id="GO:0016743">
    <property type="term" value="F:carboxyl- or carbamoyltransferase activity"/>
    <property type="evidence" value="ECO:0007669"/>
    <property type="project" value="UniProtKB-UniRule"/>
</dbReference>
<dbReference type="GO" id="GO:0008270">
    <property type="term" value="F:zinc ion binding"/>
    <property type="evidence" value="ECO:0007669"/>
    <property type="project" value="UniProtKB-UniRule"/>
</dbReference>
<dbReference type="GO" id="GO:0006633">
    <property type="term" value="P:fatty acid biosynthetic process"/>
    <property type="evidence" value="ECO:0007669"/>
    <property type="project" value="UniProtKB-KW"/>
</dbReference>
<dbReference type="GO" id="GO:2001295">
    <property type="term" value="P:malonyl-CoA biosynthetic process"/>
    <property type="evidence" value="ECO:0007669"/>
    <property type="project" value="UniProtKB-UniRule"/>
</dbReference>
<dbReference type="Gene3D" id="3.90.226.10">
    <property type="entry name" value="2-enoyl-CoA Hydratase, Chain A, domain 1"/>
    <property type="match status" value="1"/>
</dbReference>
<dbReference type="HAMAP" id="MF_01395">
    <property type="entry name" value="AcetylCoA_CT_beta"/>
    <property type="match status" value="1"/>
</dbReference>
<dbReference type="InterPro" id="IPR034733">
    <property type="entry name" value="AcCoA_carboxyl_beta"/>
</dbReference>
<dbReference type="InterPro" id="IPR000438">
    <property type="entry name" value="Acetyl_CoA_COase_Trfase_b_su"/>
</dbReference>
<dbReference type="InterPro" id="IPR029045">
    <property type="entry name" value="ClpP/crotonase-like_dom_sf"/>
</dbReference>
<dbReference type="InterPro" id="IPR011762">
    <property type="entry name" value="COA_CT_N"/>
</dbReference>
<dbReference type="InterPro" id="IPR041010">
    <property type="entry name" value="Znf-ACC"/>
</dbReference>
<dbReference type="NCBIfam" id="TIGR00515">
    <property type="entry name" value="accD"/>
    <property type="match status" value="1"/>
</dbReference>
<dbReference type="PANTHER" id="PTHR42995">
    <property type="entry name" value="ACETYL-COENZYME A CARBOXYLASE CARBOXYL TRANSFERASE SUBUNIT BETA, CHLOROPLASTIC"/>
    <property type="match status" value="1"/>
</dbReference>
<dbReference type="PANTHER" id="PTHR42995:SF5">
    <property type="entry name" value="ACETYL-COENZYME A CARBOXYLASE CARBOXYL TRANSFERASE SUBUNIT BETA, CHLOROPLASTIC"/>
    <property type="match status" value="1"/>
</dbReference>
<dbReference type="Pfam" id="PF01039">
    <property type="entry name" value="Carboxyl_trans"/>
    <property type="match status" value="1"/>
</dbReference>
<dbReference type="Pfam" id="PF17848">
    <property type="entry name" value="Zn_ribbon_ACC"/>
    <property type="match status" value="1"/>
</dbReference>
<dbReference type="PRINTS" id="PR01070">
    <property type="entry name" value="ACCCTRFRASEB"/>
</dbReference>
<dbReference type="SUPFAM" id="SSF52096">
    <property type="entry name" value="ClpP/crotonase"/>
    <property type="match status" value="1"/>
</dbReference>
<dbReference type="PROSITE" id="PS50980">
    <property type="entry name" value="COA_CT_NTER"/>
    <property type="match status" value="1"/>
</dbReference>
<reference key="1">
    <citation type="submission" date="2008-01" db="EMBL/GenBank/DDBJ databases">
        <title>Complete sequence of Pseudomonas putida GB-1.</title>
        <authorList>
            <consortium name="US DOE Joint Genome Institute"/>
            <person name="Copeland A."/>
            <person name="Lucas S."/>
            <person name="Lapidus A."/>
            <person name="Barry K."/>
            <person name="Glavina del Rio T."/>
            <person name="Dalin E."/>
            <person name="Tice H."/>
            <person name="Pitluck S."/>
            <person name="Bruce D."/>
            <person name="Goodwin L."/>
            <person name="Chertkov O."/>
            <person name="Brettin T."/>
            <person name="Detter J.C."/>
            <person name="Han C."/>
            <person name="Kuske C.R."/>
            <person name="Schmutz J."/>
            <person name="Larimer F."/>
            <person name="Land M."/>
            <person name="Hauser L."/>
            <person name="Kyrpides N."/>
            <person name="Kim E."/>
            <person name="McCarthy J.K."/>
            <person name="Richardson P."/>
        </authorList>
    </citation>
    <scope>NUCLEOTIDE SEQUENCE [LARGE SCALE GENOMIC DNA]</scope>
    <source>
        <strain>GB-1</strain>
    </source>
</reference>
<comment type="function">
    <text evidence="1">Component of the acetyl coenzyme A carboxylase (ACC) complex. Biotin carboxylase (BC) catalyzes the carboxylation of biotin on its carrier protein (BCCP) and then the CO(2) group is transferred by the transcarboxylase to acetyl-CoA to form malonyl-CoA.</text>
</comment>
<comment type="catalytic activity">
    <reaction evidence="1">
        <text>N(6)-carboxybiotinyl-L-lysyl-[protein] + acetyl-CoA = N(6)-biotinyl-L-lysyl-[protein] + malonyl-CoA</text>
        <dbReference type="Rhea" id="RHEA:54728"/>
        <dbReference type="Rhea" id="RHEA-COMP:10505"/>
        <dbReference type="Rhea" id="RHEA-COMP:10506"/>
        <dbReference type="ChEBI" id="CHEBI:57288"/>
        <dbReference type="ChEBI" id="CHEBI:57384"/>
        <dbReference type="ChEBI" id="CHEBI:83144"/>
        <dbReference type="ChEBI" id="CHEBI:83145"/>
        <dbReference type="EC" id="2.1.3.15"/>
    </reaction>
</comment>
<comment type="cofactor">
    <cofactor evidence="1">
        <name>Zn(2+)</name>
        <dbReference type="ChEBI" id="CHEBI:29105"/>
    </cofactor>
    <text evidence="1">Binds 1 zinc ion per subunit.</text>
</comment>
<comment type="pathway">
    <text evidence="1">Lipid metabolism; malonyl-CoA biosynthesis; malonyl-CoA from acetyl-CoA: step 1/1.</text>
</comment>
<comment type="subunit">
    <text evidence="1">Acetyl-CoA carboxylase is a heterohexamer composed of biotin carboxyl carrier protein (AccB), biotin carboxylase (AccC) and two subunits each of ACCase subunit alpha (AccA) and ACCase subunit beta (AccD).</text>
</comment>
<comment type="subcellular location">
    <subcellularLocation>
        <location evidence="1">Cytoplasm</location>
    </subcellularLocation>
</comment>
<comment type="similarity">
    <text evidence="1">Belongs to the AccD/PCCB family.</text>
</comment>
<keyword id="KW-0067">ATP-binding</keyword>
<keyword id="KW-0963">Cytoplasm</keyword>
<keyword id="KW-0275">Fatty acid biosynthesis</keyword>
<keyword id="KW-0276">Fatty acid metabolism</keyword>
<keyword id="KW-0444">Lipid biosynthesis</keyword>
<keyword id="KW-0443">Lipid metabolism</keyword>
<keyword id="KW-0479">Metal-binding</keyword>
<keyword id="KW-0547">Nucleotide-binding</keyword>
<keyword id="KW-0808">Transferase</keyword>
<keyword id="KW-0862">Zinc</keyword>
<keyword id="KW-0863">Zinc-finger</keyword>
<accession>B0KF95</accession>
<proteinExistence type="inferred from homology"/>
<feature type="chain" id="PRO_0000359041" description="Acetyl-coenzyme A carboxylase carboxyl transferase subunit beta">
    <location>
        <begin position="1"/>
        <end position="297"/>
    </location>
</feature>
<feature type="domain" description="CoA carboxyltransferase N-terminal" evidence="2">
    <location>
        <begin position="27"/>
        <end position="296"/>
    </location>
</feature>
<feature type="zinc finger region" description="C4-type" evidence="1">
    <location>
        <begin position="31"/>
        <end position="53"/>
    </location>
</feature>
<feature type="binding site" evidence="1">
    <location>
        <position position="31"/>
    </location>
    <ligand>
        <name>Zn(2+)</name>
        <dbReference type="ChEBI" id="CHEBI:29105"/>
    </ligand>
</feature>
<feature type="binding site" evidence="1">
    <location>
        <position position="34"/>
    </location>
    <ligand>
        <name>Zn(2+)</name>
        <dbReference type="ChEBI" id="CHEBI:29105"/>
    </ligand>
</feature>
<feature type="binding site" evidence="1">
    <location>
        <position position="50"/>
    </location>
    <ligand>
        <name>Zn(2+)</name>
        <dbReference type="ChEBI" id="CHEBI:29105"/>
    </ligand>
</feature>
<feature type="binding site" evidence="1">
    <location>
        <position position="53"/>
    </location>
    <ligand>
        <name>Zn(2+)</name>
        <dbReference type="ChEBI" id="CHEBI:29105"/>
    </ligand>
</feature>
<protein>
    <recommendedName>
        <fullName evidence="1">Acetyl-coenzyme A carboxylase carboxyl transferase subunit beta</fullName>
        <shortName evidence="1">ACCase subunit beta</shortName>
        <shortName evidence="1">Acetyl-CoA carboxylase carboxyltransferase subunit beta</shortName>
        <ecNumber evidence="1">2.1.3.15</ecNumber>
    </recommendedName>
</protein>
<organism>
    <name type="scientific">Pseudomonas putida (strain GB-1)</name>
    <dbReference type="NCBI Taxonomy" id="76869"/>
    <lineage>
        <taxon>Bacteria</taxon>
        <taxon>Pseudomonadati</taxon>
        <taxon>Pseudomonadota</taxon>
        <taxon>Gammaproteobacteria</taxon>
        <taxon>Pseudomonadales</taxon>
        <taxon>Pseudomonadaceae</taxon>
        <taxon>Pseudomonas</taxon>
    </lineage>
</organism>